<name>SECB_NOVAD</name>
<accession>Q2GAU0</accession>
<comment type="function">
    <text evidence="1">One of the proteins required for the normal export of preproteins out of the cell cytoplasm. It is a molecular chaperone that binds to a subset of precursor proteins, maintaining them in a translocation-competent state. It also specifically binds to its receptor SecA.</text>
</comment>
<comment type="subunit">
    <text evidence="1">Homotetramer, a dimer of dimers. One homotetramer interacts with 1 SecA dimer.</text>
</comment>
<comment type="subcellular location">
    <subcellularLocation>
        <location evidence="1">Cytoplasm</location>
    </subcellularLocation>
</comment>
<comment type="similarity">
    <text evidence="1">Belongs to the SecB family.</text>
</comment>
<comment type="sequence caution" evidence="2">
    <conflict type="erroneous initiation">
        <sequence resource="EMBL-CDS" id="ABD25033"/>
    </conflict>
</comment>
<feature type="chain" id="PRO_0000318251" description="Protein-export protein SecB">
    <location>
        <begin position="1"/>
        <end position="173"/>
    </location>
</feature>
<evidence type="ECO:0000255" key="1">
    <source>
        <dbReference type="HAMAP-Rule" id="MF_00821"/>
    </source>
</evidence>
<evidence type="ECO:0000305" key="2"/>
<dbReference type="EMBL" id="CP000248">
    <property type="protein sequence ID" value="ABD25033.1"/>
    <property type="status" value="ALT_INIT"/>
    <property type="molecule type" value="Genomic_DNA"/>
</dbReference>
<dbReference type="RefSeq" id="WP_041550025.1">
    <property type="nucleotide sequence ID" value="NC_007794.1"/>
</dbReference>
<dbReference type="SMR" id="Q2GAU0"/>
<dbReference type="STRING" id="279238.Saro_0586"/>
<dbReference type="KEGG" id="nar:Saro_0586"/>
<dbReference type="eggNOG" id="COG1952">
    <property type="taxonomic scope" value="Bacteria"/>
</dbReference>
<dbReference type="HOGENOM" id="CLU_111574_0_0_5"/>
<dbReference type="Proteomes" id="UP000009134">
    <property type="component" value="Chromosome"/>
</dbReference>
<dbReference type="GO" id="GO:0005737">
    <property type="term" value="C:cytoplasm"/>
    <property type="evidence" value="ECO:0007669"/>
    <property type="project" value="UniProtKB-SubCell"/>
</dbReference>
<dbReference type="GO" id="GO:0051082">
    <property type="term" value="F:unfolded protein binding"/>
    <property type="evidence" value="ECO:0007669"/>
    <property type="project" value="InterPro"/>
</dbReference>
<dbReference type="GO" id="GO:0006457">
    <property type="term" value="P:protein folding"/>
    <property type="evidence" value="ECO:0007669"/>
    <property type="project" value="UniProtKB-UniRule"/>
</dbReference>
<dbReference type="GO" id="GO:0051262">
    <property type="term" value="P:protein tetramerization"/>
    <property type="evidence" value="ECO:0007669"/>
    <property type="project" value="InterPro"/>
</dbReference>
<dbReference type="GO" id="GO:0015031">
    <property type="term" value="P:protein transport"/>
    <property type="evidence" value="ECO:0007669"/>
    <property type="project" value="UniProtKB-UniRule"/>
</dbReference>
<dbReference type="Gene3D" id="3.10.420.10">
    <property type="entry name" value="SecB-like"/>
    <property type="match status" value="1"/>
</dbReference>
<dbReference type="HAMAP" id="MF_00821">
    <property type="entry name" value="SecB"/>
    <property type="match status" value="1"/>
</dbReference>
<dbReference type="InterPro" id="IPR003708">
    <property type="entry name" value="SecB"/>
</dbReference>
<dbReference type="InterPro" id="IPR035958">
    <property type="entry name" value="SecB-like_sf"/>
</dbReference>
<dbReference type="NCBIfam" id="NF004392">
    <property type="entry name" value="PRK05751.1-3"/>
    <property type="match status" value="1"/>
</dbReference>
<dbReference type="NCBIfam" id="TIGR00809">
    <property type="entry name" value="secB"/>
    <property type="match status" value="1"/>
</dbReference>
<dbReference type="PANTHER" id="PTHR36918">
    <property type="match status" value="1"/>
</dbReference>
<dbReference type="PANTHER" id="PTHR36918:SF1">
    <property type="entry name" value="PROTEIN-EXPORT PROTEIN SECB"/>
    <property type="match status" value="1"/>
</dbReference>
<dbReference type="Pfam" id="PF02556">
    <property type="entry name" value="SecB"/>
    <property type="match status" value="1"/>
</dbReference>
<dbReference type="PRINTS" id="PR01594">
    <property type="entry name" value="SECBCHAPRONE"/>
</dbReference>
<dbReference type="SUPFAM" id="SSF54611">
    <property type="entry name" value="SecB-like"/>
    <property type="match status" value="1"/>
</dbReference>
<reference key="1">
    <citation type="submission" date="2006-01" db="EMBL/GenBank/DDBJ databases">
        <title>Complete sequence of Novosphingobium aromaticivorans DSM 12444.</title>
        <authorList>
            <consortium name="US DOE Joint Genome Institute"/>
            <person name="Copeland A."/>
            <person name="Lucas S."/>
            <person name="Lapidus A."/>
            <person name="Barry K."/>
            <person name="Detter J.C."/>
            <person name="Glavina T."/>
            <person name="Hammon N."/>
            <person name="Israni S."/>
            <person name="Pitluck S."/>
            <person name="Chain P."/>
            <person name="Malfatti S."/>
            <person name="Shin M."/>
            <person name="Vergez L."/>
            <person name="Schmutz J."/>
            <person name="Larimer F."/>
            <person name="Land M."/>
            <person name="Kyrpides N."/>
            <person name="Ivanova N."/>
            <person name="Fredrickson J."/>
            <person name="Balkwill D."/>
            <person name="Romine M.F."/>
            <person name="Richardson P."/>
        </authorList>
    </citation>
    <scope>NUCLEOTIDE SEQUENCE [LARGE SCALE GENOMIC DNA]</scope>
    <source>
        <strain>ATCC 700278 / DSM 12444 / CCUG 56034 / CIP 105152 / NBRC 16084 / F199</strain>
    </source>
</reference>
<protein>
    <recommendedName>
        <fullName evidence="1">Protein-export protein SecB</fullName>
    </recommendedName>
</protein>
<organism>
    <name type="scientific">Novosphingobium aromaticivorans (strain ATCC 700278 / DSM 12444 / CCUG 56034 / CIP 105152 / NBRC 16084 / F199)</name>
    <dbReference type="NCBI Taxonomy" id="279238"/>
    <lineage>
        <taxon>Bacteria</taxon>
        <taxon>Pseudomonadati</taxon>
        <taxon>Pseudomonadota</taxon>
        <taxon>Alphaproteobacteria</taxon>
        <taxon>Sphingomonadales</taxon>
        <taxon>Sphingomonadaceae</taxon>
        <taxon>Novosphingobium</taxon>
    </lineage>
</organism>
<sequence>MADEGNIISNLNLEDGPVPNGADTSPAIGLISQYVKDLSVENPNAPESYQWAEAPDMAVDFNISARAIQPEIHEIELKINVTSKGAQGTAFIVELAYCGLIGMRNVPDDQAHPFLFAEGPRILFPFARRIIADAVRDAGYPPLMLEPIDFNGLYMQQLAQAQATAEATPAGEA</sequence>
<gene>
    <name evidence="1" type="primary">secB</name>
    <name type="ordered locus">Saro_0586</name>
</gene>
<proteinExistence type="inferred from homology"/>
<keyword id="KW-0143">Chaperone</keyword>
<keyword id="KW-0963">Cytoplasm</keyword>
<keyword id="KW-0653">Protein transport</keyword>
<keyword id="KW-1185">Reference proteome</keyword>
<keyword id="KW-0811">Translocation</keyword>
<keyword id="KW-0813">Transport</keyword>